<dbReference type="EMBL" id="M26088">
    <property type="status" value="NOT_ANNOTATED_CDS"/>
    <property type="molecule type" value="Genomic_RNA"/>
</dbReference>
<dbReference type="EMBL" id="CY014699">
    <property type="status" value="NOT_ANNOTATED_CDS"/>
    <property type="molecule type" value="Genomic_RNA"/>
</dbReference>
<dbReference type="SMR" id="P0DJR3"/>
<dbReference type="Proteomes" id="UP000000828">
    <property type="component" value="Genome"/>
</dbReference>
<dbReference type="GO" id="GO:0003723">
    <property type="term" value="F:RNA binding"/>
    <property type="evidence" value="ECO:0007669"/>
    <property type="project" value="InterPro"/>
</dbReference>
<dbReference type="GO" id="GO:0039694">
    <property type="term" value="P:viral RNA genome replication"/>
    <property type="evidence" value="ECO:0007669"/>
    <property type="project" value="InterPro"/>
</dbReference>
<dbReference type="GO" id="GO:0075523">
    <property type="term" value="P:viral translational frameshifting"/>
    <property type="evidence" value="ECO:0007669"/>
    <property type="project" value="UniProtKB-KW"/>
</dbReference>
<dbReference type="FunFam" id="3.40.91.90:FF:000001">
    <property type="entry name" value="Polymerase acidic protein"/>
    <property type="match status" value="1"/>
</dbReference>
<dbReference type="Gene3D" id="3.40.91.90">
    <property type="entry name" value="Influenza RNA-dependent RNA polymerase subunit PA, endonuclease domain"/>
    <property type="match status" value="1"/>
</dbReference>
<dbReference type="InterPro" id="IPR001009">
    <property type="entry name" value="PA/PA-X"/>
</dbReference>
<dbReference type="InterPro" id="IPR038372">
    <property type="entry name" value="PA/PA-X_sf"/>
</dbReference>
<dbReference type="Pfam" id="PF00603">
    <property type="entry name" value="Flu_PA"/>
    <property type="match status" value="1"/>
</dbReference>
<feature type="chain" id="PRO_0000419376" description="Protein PA-X">
    <location>
        <begin position="1"/>
        <end position="252"/>
    </location>
</feature>
<feature type="active site" evidence="2">
    <location>
        <position position="80"/>
    </location>
</feature>
<feature type="active site" evidence="2">
    <location>
        <position position="108"/>
    </location>
</feature>
<feature type="site" description="Important for efficient shutoff activity and nuclear localization" evidence="4">
    <location>
        <position position="195"/>
    </location>
</feature>
<feature type="site" description="Important for efficient shutoff activity and nuclear localization" evidence="4">
    <location>
        <position position="198"/>
    </location>
</feature>
<feature type="site" description="Important for efficient shutoff activity and nuclear localization" evidence="4">
    <location>
        <position position="199"/>
    </location>
</feature>
<feature type="site" description="Important for efficient shutoff activity" evidence="3">
    <location>
        <position position="202"/>
    </location>
</feature>
<feature type="site" description="Important for efficient shutoff activity" evidence="3">
    <location>
        <position position="203"/>
    </location>
</feature>
<feature type="site" description="Important for efficient shutoff activity" evidence="3">
    <location>
        <position position="206"/>
    </location>
</feature>
<protein>
    <recommendedName>
        <fullName>Protein PA-X</fullName>
    </recommendedName>
</protein>
<evidence type="ECO:0000250" key="1">
    <source>
        <dbReference type="UniProtKB" id="P0CK64"/>
    </source>
</evidence>
<evidence type="ECO:0000250" key="2">
    <source>
        <dbReference type="UniProtKB" id="P0CK68"/>
    </source>
</evidence>
<evidence type="ECO:0000250" key="3">
    <source>
        <dbReference type="UniProtKB" id="P0DJW8"/>
    </source>
</evidence>
<evidence type="ECO:0000250" key="4">
    <source>
        <dbReference type="UniProtKB" id="P0DXO5"/>
    </source>
</evidence>
<evidence type="ECO:0000305" key="5"/>
<organism>
    <name type="scientific">Influenza A virus (strain A/Gull/Maryland/704/1977 H13N6)</name>
    <dbReference type="NCBI Taxonomy" id="384499"/>
    <lineage>
        <taxon>Viruses</taxon>
        <taxon>Riboviria</taxon>
        <taxon>Orthornavirae</taxon>
        <taxon>Negarnaviricota</taxon>
        <taxon>Polyploviricotina</taxon>
        <taxon>Insthoviricetes</taxon>
        <taxon>Articulavirales</taxon>
        <taxon>Orthomyxoviridae</taxon>
        <taxon>Alphainfluenzavirus</taxon>
        <taxon>Alphainfluenzavirus influenzae</taxon>
        <taxon>Influenza A virus</taxon>
    </lineage>
</organism>
<keyword id="KW-1132">Decay of host mRNAs by virus</keyword>
<keyword id="KW-1262">Eukaryotic host gene expression shutoff by virus</keyword>
<keyword id="KW-1035">Host cytoplasm</keyword>
<keyword id="KW-1190">Host gene expression shutoff by virus</keyword>
<keyword id="KW-1192">Host mRNA suppression by virus</keyword>
<keyword id="KW-1048">Host nucleus</keyword>
<keyword id="KW-0945">Host-virus interaction</keyword>
<keyword id="KW-0688">Ribosomal frameshifting</keyword>
<reference key="1">
    <citation type="journal article" date="1989" name="Virology">
        <title>Evolutionary pathways of the PA genes of influenza A viruses.</title>
        <authorList>
            <person name="Okazaki K."/>
            <person name="Kawaoka Y."/>
            <person name="Webster R.G."/>
        </authorList>
    </citation>
    <scope>NUCLEOTIDE SEQUENCE [GENOMIC RNA]</scope>
</reference>
<reference key="2">
    <citation type="journal article" date="2006" name="Science">
        <title>Large-scale sequence analysis of avian influenza isolates.</title>
        <authorList>
            <person name="Obenauer J.C."/>
            <person name="Denson J."/>
            <person name="Mehta P.K."/>
            <person name="Su X."/>
            <person name="Mukatira S."/>
            <person name="Finkelstein D.B."/>
            <person name="Xu X."/>
            <person name="Wang J."/>
            <person name="Ma J."/>
            <person name="Fan Y."/>
            <person name="Rakestraw K.M."/>
            <person name="Webster R.G."/>
            <person name="Hoffmann E."/>
            <person name="Krauss S."/>
            <person name="Zheng J."/>
            <person name="Zhang Z."/>
            <person name="Naeve C.W."/>
        </authorList>
    </citation>
    <scope>NUCLEOTIDE SEQUENCE [GENOMIC RNA]</scope>
</reference>
<organismHost>
    <name type="scientific">Aves</name>
    <dbReference type="NCBI Taxonomy" id="8782"/>
</organismHost>
<gene>
    <name type="primary">PA</name>
</gene>
<proteinExistence type="inferred from homology"/>
<comment type="function">
    <text evidence="1 4">Plays a major role in the shutoff of the host protein expression by cleaving mRNAs probably via an endonuclease activity. This host shutoff allows the virus to escape from the host antiviral response (By similarity). Hijacks host RNA splicing machinery to selectively target host RNAs containing introns for destruction. This may explain the preferential degradation of RNAs that have undergone co- or post-transcriptional processing (By similarity).</text>
</comment>
<comment type="subcellular location">
    <subcellularLocation>
        <location evidence="4">Host cytoplasm</location>
    </subcellularLocation>
    <subcellularLocation>
        <location evidence="4">Host nucleus</location>
    </subcellularLocation>
</comment>
<comment type="alternative products">
    <event type="ribosomal frameshifting"/>
    <isoform>
        <id>P0DJR3-1</id>
        <name>PA-X</name>
        <sequence type="displayed"/>
    </isoform>
    <isoform>
        <id>P13167-1</id>
        <name>PA</name>
        <sequence type="external"/>
    </isoform>
</comment>
<comment type="domain">
    <text evidence="1 4">The probable endonuclease active site in the N-terminus and the basic amino acid cluster in the C-terminus are important for the shutoff activity. The C-terminus acts as a nuclear localization signal (By similarity). The C-terminus is recruited to host protein complexes involved in nuclear Pol II RNA processing (By similarity).</text>
</comment>
<comment type="similarity">
    <text evidence="5">Belongs to the influenza viruses PA-X family.</text>
</comment>
<name>PAX_I77AF</name>
<sequence>MEDFVRQCFNPMIVELAEKAMKEYGEDPKIETNKFAAICTHLEVCFMYSDFHFIDERGESIIVESGDPNALLKHRFEIIEGRDRTMAWTVVNSICNTTGVEKPKFLPDLYDYKENRFIEIGVTRREVHIYYLEKANKIKSEKTHIHIFSFTGEEMATKADYTLDEESRARIKTRLFTIRQEMASRGLWDSFVSPREAKRQLKKDLKLQEPCAGSPTKVSHRTSPALKTLEPMWMDSNRTAALRASFLKCPKK</sequence>
<accession>P0DJR3</accession>